<feature type="chain" id="PRO_1000009502" description="tRNA-specific 2-thiouridylase MnmA">
    <location>
        <begin position="1"/>
        <end position="362"/>
    </location>
</feature>
<feature type="region of interest" description="Interaction with tRNA" evidence="1">
    <location>
        <begin position="147"/>
        <end position="149"/>
    </location>
</feature>
<feature type="active site" description="Nucleophile" evidence="1">
    <location>
        <position position="101"/>
    </location>
</feature>
<feature type="active site" description="Cysteine persulfide intermediate" evidence="1">
    <location>
        <position position="197"/>
    </location>
</feature>
<feature type="binding site" evidence="1">
    <location>
        <begin position="6"/>
        <end position="13"/>
    </location>
    <ligand>
        <name>ATP</name>
        <dbReference type="ChEBI" id="CHEBI:30616"/>
    </ligand>
</feature>
<feature type="binding site" evidence="1">
    <location>
        <position position="32"/>
    </location>
    <ligand>
        <name>ATP</name>
        <dbReference type="ChEBI" id="CHEBI:30616"/>
    </ligand>
</feature>
<feature type="binding site" evidence="1">
    <location>
        <position position="125"/>
    </location>
    <ligand>
        <name>ATP</name>
        <dbReference type="ChEBI" id="CHEBI:30616"/>
    </ligand>
</feature>
<feature type="site" description="Interaction with tRNA" evidence="1">
    <location>
        <position position="126"/>
    </location>
</feature>
<feature type="site" description="Interaction with tRNA" evidence="1">
    <location>
        <position position="336"/>
    </location>
</feature>
<feature type="disulfide bond" description="Alternate" evidence="1">
    <location>
        <begin position="101"/>
        <end position="197"/>
    </location>
</feature>
<keyword id="KW-0067">ATP-binding</keyword>
<keyword id="KW-0963">Cytoplasm</keyword>
<keyword id="KW-1015">Disulfide bond</keyword>
<keyword id="KW-0547">Nucleotide-binding</keyword>
<keyword id="KW-1185">Reference proteome</keyword>
<keyword id="KW-0694">RNA-binding</keyword>
<keyword id="KW-0808">Transferase</keyword>
<keyword id="KW-0819">tRNA processing</keyword>
<keyword id="KW-0820">tRNA-binding</keyword>
<name>MNMA_ACIC1</name>
<dbReference type="EC" id="2.8.1.13" evidence="1"/>
<dbReference type="EMBL" id="CP000481">
    <property type="protein sequence ID" value="ABK52462.1"/>
    <property type="molecule type" value="Genomic_DNA"/>
</dbReference>
<dbReference type="RefSeq" id="WP_011719525.1">
    <property type="nucleotide sequence ID" value="NC_008578.1"/>
</dbReference>
<dbReference type="SMR" id="A0LSQ2"/>
<dbReference type="FunCoup" id="A0LSQ2">
    <property type="interactions" value="315"/>
</dbReference>
<dbReference type="STRING" id="351607.Acel_0689"/>
<dbReference type="KEGG" id="ace:Acel_0689"/>
<dbReference type="eggNOG" id="COG0482">
    <property type="taxonomic scope" value="Bacteria"/>
</dbReference>
<dbReference type="HOGENOM" id="CLU_035188_0_2_11"/>
<dbReference type="InParanoid" id="A0LSQ2"/>
<dbReference type="OrthoDB" id="9800696at2"/>
<dbReference type="Proteomes" id="UP000008221">
    <property type="component" value="Chromosome"/>
</dbReference>
<dbReference type="GO" id="GO:0005737">
    <property type="term" value="C:cytoplasm"/>
    <property type="evidence" value="ECO:0007669"/>
    <property type="project" value="UniProtKB-SubCell"/>
</dbReference>
<dbReference type="GO" id="GO:0005524">
    <property type="term" value="F:ATP binding"/>
    <property type="evidence" value="ECO:0007669"/>
    <property type="project" value="UniProtKB-KW"/>
</dbReference>
<dbReference type="GO" id="GO:0000049">
    <property type="term" value="F:tRNA binding"/>
    <property type="evidence" value="ECO:0007669"/>
    <property type="project" value="UniProtKB-KW"/>
</dbReference>
<dbReference type="GO" id="GO:0103016">
    <property type="term" value="F:tRNA-uridine 2-sulfurtransferase activity"/>
    <property type="evidence" value="ECO:0007669"/>
    <property type="project" value="UniProtKB-EC"/>
</dbReference>
<dbReference type="GO" id="GO:0002143">
    <property type="term" value="P:tRNA wobble position uridine thiolation"/>
    <property type="evidence" value="ECO:0007669"/>
    <property type="project" value="TreeGrafter"/>
</dbReference>
<dbReference type="CDD" id="cd01998">
    <property type="entry name" value="MnmA_TRMU-like"/>
    <property type="match status" value="1"/>
</dbReference>
<dbReference type="FunFam" id="3.40.50.620:FF:000057">
    <property type="entry name" value="tRNA-specific 2-thiouridylase MnmA"/>
    <property type="match status" value="1"/>
</dbReference>
<dbReference type="Gene3D" id="2.30.30.280">
    <property type="entry name" value="Adenine nucleotide alpha hydrolases-like domains"/>
    <property type="match status" value="1"/>
</dbReference>
<dbReference type="Gene3D" id="3.40.50.620">
    <property type="entry name" value="HUPs"/>
    <property type="match status" value="1"/>
</dbReference>
<dbReference type="Gene3D" id="2.40.30.10">
    <property type="entry name" value="Translation factors"/>
    <property type="match status" value="1"/>
</dbReference>
<dbReference type="HAMAP" id="MF_00144">
    <property type="entry name" value="tRNA_thiouridyl_MnmA"/>
    <property type="match status" value="1"/>
</dbReference>
<dbReference type="InterPro" id="IPR004506">
    <property type="entry name" value="MnmA-like"/>
</dbReference>
<dbReference type="InterPro" id="IPR046885">
    <property type="entry name" value="MnmA-like_C"/>
</dbReference>
<dbReference type="InterPro" id="IPR046884">
    <property type="entry name" value="MnmA-like_central"/>
</dbReference>
<dbReference type="InterPro" id="IPR023382">
    <property type="entry name" value="MnmA-like_central_sf"/>
</dbReference>
<dbReference type="InterPro" id="IPR014729">
    <property type="entry name" value="Rossmann-like_a/b/a_fold"/>
</dbReference>
<dbReference type="NCBIfam" id="NF001138">
    <property type="entry name" value="PRK00143.1"/>
    <property type="match status" value="1"/>
</dbReference>
<dbReference type="NCBIfam" id="TIGR00420">
    <property type="entry name" value="trmU"/>
    <property type="match status" value="1"/>
</dbReference>
<dbReference type="PANTHER" id="PTHR11933:SF5">
    <property type="entry name" value="MITOCHONDRIAL TRNA-SPECIFIC 2-THIOURIDYLASE 1"/>
    <property type="match status" value="1"/>
</dbReference>
<dbReference type="PANTHER" id="PTHR11933">
    <property type="entry name" value="TRNA 5-METHYLAMINOMETHYL-2-THIOURIDYLATE -METHYLTRANSFERASE"/>
    <property type="match status" value="1"/>
</dbReference>
<dbReference type="Pfam" id="PF03054">
    <property type="entry name" value="tRNA_Me_trans"/>
    <property type="match status" value="1"/>
</dbReference>
<dbReference type="Pfam" id="PF20258">
    <property type="entry name" value="tRNA_Me_trans_C"/>
    <property type="match status" value="1"/>
</dbReference>
<dbReference type="Pfam" id="PF20259">
    <property type="entry name" value="tRNA_Me_trans_M"/>
    <property type="match status" value="1"/>
</dbReference>
<dbReference type="SUPFAM" id="SSF52402">
    <property type="entry name" value="Adenine nucleotide alpha hydrolases-like"/>
    <property type="match status" value="1"/>
</dbReference>
<sequence length="362" mass="38521">MRVLAAMSGGVDSSVAAARMVDAGHEVVGVHLALSSTPRSHREGARGCCSLEDARDARRAADVLGIPFYVWDVAERFRQDVIEDFLAEYAQGRTPNPCLRCNERIKFAAVLDRALALGFDAVCTGHYARIQRGPQGLELHRAADSAKDQSYVLGVLSQPQLEHALFPLGDSLKTEVRAEAAARGLAVADKPDSHDICFIPDGDTADFLRSHLGAAPGDIVDSSGRRLGSHDGAYQFTVGQRRGLRLGTPAPDGRPRYVLEVSPVTRTVVVGTADELSVTGLTGVRPIWCGPPPDAPLECTVQYRAHGAAAPAVVELRGDEVDVEFRAPVRGVAPGQAAVFYADTRVLGSATIARTRRAAVGS</sequence>
<reference key="1">
    <citation type="journal article" date="2009" name="Genome Res.">
        <title>Complete genome of the cellulolytic thermophile Acidothermus cellulolyticus 11B provides insights into its ecophysiological and evolutionary adaptations.</title>
        <authorList>
            <person name="Barabote R.D."/>
            <person name="Xie G."/>
            <person name="Leu D.H."/>
            <person name="Normand P."/>
            <person name="Necsulea A."/>
            <person name="Daubin V."/>
            <person name="Medigue C."/>
            <person name="Adney W.S."/>
            <person name="Xu X.C."/>
            <person name="Lapidus A."/>
            <person name="Parales R.E."/>
            <person name="Detter C."/>
            <person name="Pujic P."/>
            <person name="Bruce D."/>
            <person name="Lavire C."/>
            <person name="Challacombe J.F."/>
            <person name="Brettin T.S."/>
            <person name="Berry A.M."/>
        </authorList>
    </citation>
    <scope>NUCLEOTIDE SEQUENCE [LARGE SCALE GENOMIC DNA]</scope>
    <source>
        <strain>ATCC 43068 / DSM 8971 / 11B</strain>
    </source>
</reference>
<evidence type="ECO:0000255" key="1">
    <source>
        <dbReference type="HAMAP-Rule" id="MF_00144"/>
    </source>
</evidence>
<protein>
    <recommendedName>
        <fullName evidence="1">tRNA-specific 2-thiouridylase MnmA</fullName>
        <ecNumber evidence="1">2.8.1.13</ecNumber>
    </recommendedName>
</protein>
<gene>
    <name evidence="1" type="primary">mnmA</name>
    <name type="synonym">trmU</name>
    <name type="ordered locus">Acel_0689</name>
</gene>
<comment type="function">
    <text evidence="1">Catalyzes the 2-thiolation of uridine at the wobble position (U34) of tRNA, leading to the formation of s(2)U34.</text>
</comment>
<comment type="catalytic activity">
    <reaction evidence="1">
        <text>S-sulfanyl-L-cysteinyl-[protein] + uridine(34) in tRNA + AH2 + ATP = 2-thiouridine(34) in tRNA + L-cysteinyl-[protein] + A + AMP + diphosphate + H(+)</text>
        <dbReference type="Rhea" id="RHEA:47032"/>
        <dbReference type="Rhea" id="RHEA-COMP:10131"/>
        <dbReference type="Rhea" id="RHEA-COMP:11726"/>
        <dbReference type="Rhea" id="RHEA-COMP:11727"/>
        <dbReference type="Rhea" id="RHEA-COMP:11728"/>
        <dbReference type="ChEBI" id="CHEBI:13193"/>
        <dbReference type="ChEBI" id="CHEBI:15378"/>
        <dbReference type="ChEBI" id="CHEBI:17499"/>
        <dbReference type="ChEBI" id="CHEBI:29950"/>
        <dbReference type="ChEBI" id="CHEBI:30616"/>
        <dbReference type="ChEBI" id="CHEBI:33019"/>
        <dbReference type="ChEBI" id="CHEBI:61963"/>
        <dbReference type="ChEBI" id="CHEBI:65315"/>
        <dbReference type="ChEBI" id="CHEBI:87170"/>
        <dbReference type="ChEBI" id="CHEBI:456215"/>
        <dbReference type="EC" id="2.8.1.13"/>
    </reaction>
</comment>
<comment type="subcellular location">
    <subcellularLocation>
        <location evidence="1">Cytoplasm</location>
    </subcellularLocation>
</comment>
<comment type="similarity">
    <text evidence="1">Belongs to the MnmA/TRMU family.</text>
</comment>
<accession>A0LSQ2</accession>
<proteinExistence type="inferred from homology"/>
<organism>
    <name type="scientific">Acidothermus cellulolyticus (strain ATCC 43068 / DSM 8971 / 11B)</name>
    <dbReference type="NCBI Taxonomy" id="351607"/>
    <lineage>
        <taxon>Bacteria</taxon>
        <taxon>Bacillati</taxon>
        <taxon>Actinomycetota</taxon>
        <taxon>Actinomycetes</taxon>
        <taxon>Acidothermales</taxon>
        <taxon>Acidothermaceae</taxon>
        <taxon>Acidothermus</taxon>
    </lineage>
</organism>